<accession>Q2S026</accession>
<organism>
    <name type="scientific">Salinibacter ruber (strain DSM 13855 / M31)</name>
    <dbReference type="NCBI Taxonomy" id="309807"/>
    <lineage>
        <taxon>Bacteria</taxon>
        <taxon>Pseudomonadati</taxon>
        <taxon>Rhodothermota</taxon>
        <taxon>Rhodothermia</taxon>
        <taxon>Rhodothermales</taxon>
        <taxon>Salinibacteraceae</taxon>
        <taxon>Salinibacter</taxon>
    </lineage>
</organism>
<gene>
    <name evidence="1" type="primary">gpmI</name>
    <name type="ordered locus">SRU_2355</name>
</gene>
<sequence length="523" mass="57178">MDSSKRHLLLILDGWGLADDPSVSAVEQADTPFVDHLYDEYPHGVLKASGLEVGLPDGQMGNSEVGHTNLGAGRVVYQEILRISKAIEDGSFFENDALVRAARHAKASDQKLHLMGCFSDGGVHSHLEHLYGLLELARREGLAPAQVNVHAFTDGRDTDPHGGVDYVEQFQKKADEIGVGRLASIVGRYYAMDRDERWARTERAYRLLTDGTGAAFDDPVTALKASYDDGVTDEFVEPRRIRADDADAFGDHGTRIEDGDAVVYYNFRSDRARQLTRAFTEADFDGFERERPDDLLFVTMSPYDDEFDLPVAFEKLNLEGTLGEVLSARGGRQLRAAETEKYAHVTYFFSGGREAPFDGEDRVLVPSPKVDTYDQQPEMSAPELADRVSRSLREADYTLAVLNFANPDMVGHTGDFEAAVAACEAVDRGARQVVEAARDQGYSVSIIADHGNADRLQNPDGSPHTAHTTALVPHIILKDGFEGPVRDGKLGDVAPTILTLLGEDVPDAMDGEVLVPAERAAAS</sequence>
<protein>
    <recommendedName>
        <fullName evidence="1">2,3-bisphosphoglycerate-independent phosphoglycerate mutase</fullName>
        <shortName evidence="1">BPG-independent PGAM</shortName>
        <shortName evidence="1">Phosphoglyceromutase</shortName>
        <shortName evidence="1">iPGM</shortName>
        <ecNumber evidence="1">5.4.2.12</ecNumber>
    </recommendedName>
</protein>
<evidence type="ECO:0000255" key="1">
    <source>
        <dbReference type="HAMAP-Rule" id="MF_01038"/>
    </source>
</evidence>
<proteinExistence type="inferred from homology"/>
<comment type="function">
    <text evidence="1">Catalyzes the interconversion of 2-phosphoglycerate and 3-phosphoglycerate.</text>
</comment>
<comment type="catalytic activity">
    <reaction evidence="1">
        <text>(2R)-2-phosphoglycerate = (2R)-3-phosphoglycerate</text>
        <dbReference type="Rhea" id="RHEA:15901"/>
        <dbReference type="ChEBI" id="CHEBI:58272"/>
        <dbReference type="ChEBI" id="CHEBI:58289"/>
        <dbReference type="EC" id="5.4.2.12"/>
    </reaction>
</comment>
<comment type="cofactor">
    <cofactor evidence="1">
        <name>Mn(2+)</name>
        <dbReference type="ChEBI" id="CHEBI:29035"/>
    </cofactor>
    <text evidence="1">Binds 2 manganese ions per subunit.</text>
</comment>
<comment type="pathway">
    <text evidence="1">Carbohydrate degradation; glycolysis; pyruvate from D-glyceraldehyde 3-phosphate: step 3/5.</text>
</comment>
<comment type="subunit">
    <text evidence="1">Monomer.</text>
</comment>
<comment type="similarity">
    <text evidence="1">Belongs to the BPG-independent phosphoglycerate mutase family.</text>
</comment>
<reference key="1">
    <citation type="journal article" date="2005" name="Proc. Natl. Acad. Sci. U.S.A.">
        <title>The genome of Salinibacter ruber: convergence and gene exchange among hyperhalophilic bacteria and archaea.</title>
        <authorList>
            <person name="Mongodin E.F."/>
            <person name="Nelson K.E."/>
            <person name="Daugherty S."/>
            <person name="DeBoy R.T."/>
            <person name="Wister J."/>
            <person name="Khouri H."/>
            <person name="Weidman J."/>
            <person name="Walsh D.A."/>
            <person name="Papke R.T."/>
            <person name="Sanchez Perez G."/>
            <person name="Sharma A.K."/>
            <person name="Nesbo C.L."/>
            <person name="MacLeod D."/>
            <person name="Bapteste E."/>
            <person name="Doolittle W.F."/>
            <person name="Charlebois R.L."/>
            <person name="Legault B."/>
            <person name="Rodriguez-Valera F."/>
        </authorList>
    </citation>
    <scope>NUCLEOTIDE SEQUENCE [LARGE SCALE GENOMIC DNA]</scope>
    <source>
        <strain>DSM 13855 / CECT 5946 / M31</strain>
    </source>
</reference>
<dbReference type="EC" id="5.4.2.12" evidence="1"/>
<dbReference type="EMBL" id="CP000159">
    <property type="protein sequence ID" value="ABC44963.1"/>
    <property type="molecule type" value="Genomic_DNA"/>
</dbReference>
<dbReference type="RefSeq" id="WP_011405073.1">
    <property type="nucleotide sequence ID" value="NC_007677.1"/>
</dbReference>
<dbReference type="RefSeq" id="YP_446455.1">
    <property type="nucleotide sequence ID" value="NC_007677.1"/>
</dbReference>
<dbReference type="SMR" id="Q2S026"/>
<dbReference type="STRING" id="309807.SRU_2355"/>
<dbReference type="EnsemblBacteria" id="ABC44963">
    <property type="protein sequence ID" value="ABC44963"/>
    <property type="gene ID" value="SRU_2355"/>
</dbReference>
<dbReference type="KEGG" id="sru:SRU_2355"/>
<dbReference type="PATRIC" id="fig|309807.25.peg.2453"/>
<dbReference type="eggNOG" id="COG0696">
    <property type="taxonomic scope" value="Bacteria"/>
</dbReference>
<dbReference type="HOGENOM" id="CLU_026099_2_0_10"/>
<dbReference type="OrthoDB" id="9800863at2"/>
<dbReference type="UniPathway" id="UPA00109">
    <property type="reaction ID" value="UER00186"/>
</dbReference>
<dbReference type="Proteomes" id="UP000008674">
    <property type="component" value="Chromosome"/>
</dbReference>
<dbReference type="GO" id="GO:0005829">
    <property type="term" value="C:cytosol"/>
    <property type="evidence" value="ECO:0007669"/>
    <property type="project" value="TreeGrafter"/>
</dbReference>
<dbReference type="GO" id="GO:0030145">
    <property type="term" value="F:manganese ion binding"/>
    <property type="evidence" value="ECO:0007669"/>
    <property type="project" value="UniProtKB-UniRule"/>
</dbReference>
<dbReference type="GO" id="GO:0004619">
    <property type="term" value="F:phosphoglycerate mutase activity"/>
    <property type="evidence" value="ECO:0007669"/>
    <property type="project" value="UniProtKB-EC"/>
</dbReference>
<dbReference type="GO" id="GO:0006007">
    <property type="term" value="P:glucose catabolic process"/>
    <property type="evidence" value="ECO:0007669"/>
    <property type="project" value="InterPro"/>
</dbReference>
<dbReference type="GO" id="GO:0006096">
    <property type="term" value="P:glycolytic process"/>
    <property type="evidence" value="ECO:0007669"/>
    <property type="project" value="UniProtKB-UniRule"/>
</dbReference>
<dbReference type="CDD" id="cd16010">
    <property type="entry name" value="iPGM"/>
    <property type="match status" value="1"/>
</dbReference>
<dbReference type="FunFam" id="3.40.1450.10:FF:000002">
    <property type="entry name" value="2,3-bisphosphoglycerate-independent phosphoglycerate mutase"/>
    <property type="match status" value="1"/>
</dbReference>
<dbReference type="Gene3D" id="3.40.720.10">
    <property type="entry name" value="Alkaline Phosphatase, subunit A"/>
    <property type="match status" value="1"/>
</dbReference>
<dbReference type="Gene3D" id="3.40.1450.10">
    <property type="entry name" value="BPG-independent phosphoglycerate mutase, domain B"/>
    <property type="match status" value="1"/>
</dbReference>
<dbReference type="HAMAP" id="MF_01038">
    <property type="entry name" value="GpmI"/>
    <property type="match status" value="1"/>
</dbReference>
<dbReference type="InterPro" id="IPR017850">
    <property type="entry name" value="Alkaline_phosphatase_core_sf"/>
</dbReference>
<dbReference type="InterPro" id="IPR011258">
    <property type="entry name" value="BPG-indep_PGM_N"/>
</dbReference>
<dbReference type="InterPro" id="IPR006124">
    <property type="entry name" value="Metalloenzyme"/>
</dbReference>
<dbReference type="InterPro" id="IPR036646">
    <property type="entry name" value="PGAM_B_sf"/>
</dbReference>
<dbReference type="InterPro" id="IPR005995">
    <property type="entry name" value="Pgm_bpd_ind"/>
</dbReference>
<dbReference type="NCBIfam" id="TIGR01307">
    <property type="entry name" value="pgm_bpd_ind"/>
    <property type="match status" value="1"/>
</dbReference>
<dbReference type="PANTHER" id="PTHR31637">
    <property type="entry name" value="2,3-BISPHOSPHOGLYCERATE-INDEPENDENT PHOSPHOGLYCERATE MUTASE"/>
    <property type="match status" value="1"/>
</dbReference>
<dbReference type="PANTHER" id="PTHR31637:SF0">
    <property type="entry name" value="2,3-BISPHOSPHOGLYCERATE-INDEPENDENT PHOSPHOGLYCERATE MUTASE"/>
    <property type="match status" value="1"/>
</dbReference>
<dbReference type="Pfam" id="PF06415">
    <property type="entry name" value="iPGM_N"/>
    <property type="match status" value="1"/>
</dbReference>
<dbReference type="Pfam" id="PF01676">
    <property type="entry name" value="Metalloenzyme"/>
    <property type="match status" value="1"/>
</dbReference>
<dbReference type="PIRSF" id="PIRSF001492">
    <property type="entry name" value="IPGAM"/>
    <property type="match status" value="1"/>
</dbReference>
<dbReference type="SUPFAM" id="SSF64158">
    <property type="entry name" value="2,3-Bisphosphoglycerate-independent phosphoglycerate mutase, substrate-binding domain"/>
    <property type="match status" value="1"/>
</dbReference>
<dbReference type="SUPFAM" id="SSF53649">
    <property type="entry name" value="Alkaline phosphatase-like"/>
    <property type="match status" value="1"/>
</dbReference>
<feature type="chain" id="PRO_1000135906" description="2,3-bisphosphoglycerate-independent phosphoglycerate mutase">
    <location>
        <begin position="1"/>
        <end position="523"/>
    </location>
</feature>
<feature type="active site" description="Phosphoserine intermediate" evidence="1">
    <location>
        <position position="63"/>
    </location>
</feature>
<feature type="binding site" evidence="1">
    <location>
        <position position="13"/>
    </location>
    <ligand>
        <name>Mn(2+)</name>
        <dbReference type="ChEBI" id="CHEBI:29035"/>
        <label>2</label>
    </ligand>
</feature>
<feature type="binding site" evidence="1">
    <location>
        <position position="63"/>
    </location>
    <ligand>
        <name>Mn(2+)</name>
        <dbReference type="ChEBI" id="CHEBI:29035"/>
        <label>2</label>
    </ligand>
</feature>
<feature type="binding site" evidence="1">
    <location>
        <position position="124"/>
    </location>
    <ligand>
        <name>substrate</name>
    </ligand>
</feature>
<feature type="binding site" evidence="1">
    <location>
        <begin position="156"/>
        <end position="157"/>
    </location>
    <ligand>
        <name>substrate</name>
    </ligand>
</feature>
<feature type="binding site" evidence="1">
    <location>
        <position position="188"/>
    </location>
    <ligand>
        <name>substrate</name>
    </ligand>
</feature>
<feature type="binding site" evidence="1">
    <location>
        <position position="194"/>
    </location>
    <ligand>
        <name>substrate</name>
    </ligand>
</feature>
<feature type="binding site" evidence="1">
    <location>
        <begin position="268"/>
        <end position="271"/>
    </location>
    <ligand>
        <name>substrate</name>
    </ligand>
</feature>
<feature type="binding site" evidence="1">
    <location>
        <position position="341"/>
    </location>
    <ligand>
        <name>substrate</name>
    </ligand>
</feature>
<feature type="binding site" evidence="1">
    <location>
        <position position="408"/>
    </location>
    <ligand>
        <name>Mn(2+)</name>
        <dbReference type="ChEBI" id="CHEBI:29035"/>
        <label>1</label>
    </ligand>
</feature>
<feature type="binding site" evidence="1">
    <location>
        <position position="412"/>
    </location>
    <ligand>
        <name>Mn(2+)</name>
        <dbReference type="ChEBI" id="CHEBI:29035"/>
        <label>1</label>
    </ligand>
</feature>
<feature type="binding site" evidence="1">
    <location>
        <position position="449"/>
    </location>
    <ligand>
        <name>Mn(2+)</name>
        <dbReference type="ChEBI" id="CHEBI:29035"/>
        <label>2</label>
    </ligand>
</feature>
<feature type="binding site" evidence="1">
    <location>
        <position position="450"/>
    </location>
    <ligand>
        <name>Mn(2+)</name>
        <dbReference type="ChEBI" id="CHEBI:29035"/>
        <label>2</label>
    </ligand>
</feature>
<feature type="binding site" evidence="1">
    <location>
        <position position="467"/>
    </location>
    <ligand>
        <name>Mn(2+)</name>
        <dbReference type="ChEBI" id="CHEBI:29035"/>
        <label>1</label>
    </ligand>
</feature>
<keyword id="KW-0324">Glycolysis</keyword>
<keyword id="KW-0413">Isomerase</keyword>
<keyword id="KW-0464">Manganese</keyword>
<keyword id="KW-0479">Metal-binding</keyword>
<keyword id="KW-1185">Reference proteome</keyword>
<name>GPMI_SALRD</name>